<evidence type="ECO:0000255" key="1"/>
<evidence type="ECO:0000305" key="2"/>
<accession>Q58115</accession>
<sequence length="377" mass="44630">MFAFEGFKWEIVEIFDWKGLKKLQTTFQNYLLILSMIVSIAVVVAIKNYDSLWSLITNSSDSSNFLTVGSILATISALLVSISWVIIQTSSDRLSNILMWIWVRDVRFLTFVVISFTTVFLFILISLTHVQLHVIDYGIIYYVIMLNFLMYALYIKAFANVINPKYAVDLILRDKDIGDKSGGYGDLTDAESRLFAVYEIIEKRIKVGDVYAVIKCLNMINKNFNKYWMFIKDEKREKYLRDFLRILSKLRVEYRKNCLNRKNKPYSKKGLEAFKKTEFIVSFYKTIEEKIKTRDINSINKFLSETYNNISNYEMFNDKTYLEIFVHHLKELLEKYEKEKNENKLDEEIFNELKDELEKLINKCNNKLRELESQNNN</sequence>
<organism>
    <name type="scientific">Methanocaldococcus jannaschii (strain ATCC 43067 / DSM 2661 / JAL-1 / JCM 10045 / NBRC 100440)</name>
    <name type="common">Methanococcus jannaschii</name>
    <dbReference type="NCBI Taxonomy" id="243232"/>
    <lineage>
        <taxon>Archaea</taxon>
        <taxon>Methanobacteriati</taxon>
        <taxon>Methanobacteriota</taxon>
        <taxon>Methanomada group</taxon>
        <taxon>Methanococci</taxon>
        <taxon>Methanococcales</taxon>
        <taxon>Methanocaldococcaceae</taxon>
        <taxon>Methanocaldococcus</taxon>
    </lineage>
</organism>
<comment type="subcellular location">
    <subcellularLocation>
        <location evidence="2">Cell membrane</location>
        <topology evidence="2">Multi-pass membrane protein</topology>
    </subcellularLocation>
</comment>
<name>Y704_METJA</name>
<protein>
    <recommendedName>
        <fullName>Uncharacterized protein MJ0704</fullName>
    </recommendedName>
</protein>
<proteinExistence type="predicted"/>
<feature type="chain" id="PRO_0000106997" description="Uncharacterized protein MJ0704">
    <location>
        <begin position="1"/>
        <end position="377"/>
    </location>
</feature>
<feature type="transmembrane region" description="Helical" evidence="1">
    <location>
        <begin position="26"/>
        <end position="46"/>
    </location>
</feature>
<feature type="transmembrane region" description="Helical" evidence="1">
    <location>
        <begin position="67"/>
        <end position="87"/>
    </location>
</feature>
<feature type="transmembrane region" description="Helical" evidence="1">
    <location>
        <begin position="108"/>
        <end position="128"/>
    </location>
</feature>
<feature type="transmembrane region" description="Helical" evidence="1">
    <location>
        <begin position="135"/>
        <end position="155"/>
    </location>
</feature>
<reference key="1">
    <citation type="journal article" date="1996" name="Science">
        <title>Complete genome sequence of the methanogenic archaeon, Methanococcus jannaschii.</title>
        <authorList>
            <person name="Bult C.J."/>
            <person name="White O."/>
            <person name="Olsen G.J."/>
            <person name="Zhou L."/>
            <person name="Fleischmann R.D."/>
            <person name="Sutton G.G."/>
            <person name="Blake J.A."/>
            <person name="FitzGerald L.M."/>
            <person name="Clayton R.A."/>
            <person name="Gocayne J.D."/>
            <person name="Kerlavage A.R."/>
            <person name="Dougherty B.A."/>
            <person name="Tomb J.-F."/>
            <person name="Adams M.D."/>
            <person name="Reich C.I."/>
            <person name="Overbeek R."/>
            <person name="Kirkness E.F."/>
            <person name="Weinstock K.G."/>
            <person name="Merrick J.M."/>
            <person name="Glodek A."/>
            <person name="Scott J.L."/>
            <person name="Geoghagen N.S.M."/>
            <person name="Weidman J.F."/>
            <person name="Fuhrmann J.L."/>
            <person name="Nguyen D."/>
            <person name="Utterback T.R."/>
            <person name="Kelley J.M."/>
            <person name="Peterson J.D."/>
            <person name="Sadow P.W."/>
            <person name="Hanna M.C."/>
            <person name="Cotton M.D."/>
            <person name="Roberts K.M."/>
            <person name="Hurst M.A."/>
            <person name="Kaine B.P."/>
            <person name="Borodovsky M."/>
            <person name="Klenk H.-P."/>
            <person name="Fraser C.M."/>
            <person name="Smith H.O."/>
            <person name="Woese C.R."/>
            <person name="Venter J.C."/>
        </authorList>
    </citation>
    <scope>NUCLEOTIDE SEQUENCE [LARGE SCALE GENOMIC DNA]</scope>
    <source>
        <strain>ATCC 43067 / DSM 2661 / JAL-1 / JCM 10045 / NBRC 100440</strain>
    </source>
</reference>
<keyword id="KW-1003">Cell membrane</keyword>
<keyword id="KW-0472">Membrane</keyword>
<keyword id="KW-1185">Reference proteome</keyword>
<keyword id="KW-0812">Transmembrane</keyword>
<keyword id="KW-1133">Transmembrane helix</keyword>
<dbReference type="EMBL" id="L77117">
    <property type="protein sequence ID" value="AAB98705.1"/>
    <property type="molecule type" value="Genomic_DNA"/>
</dbReference>
<dbReference type="PIR" id="H64387">
    <property type="entry name" value="H64387"/>
</dbReference>
<dbReference type="RefSeq" id="WP_010870210.1">
    <property type="nucleotide sequence ID" value="NC_000909.1"/>
</dbReference>
<dbReference type="SMR" id="Q58115"/>
<dbReference type="STRING" id="243232.MJ_0704"/>
<dbReference type="PaxDb" id="243232-MJ_0704"/>
<dbReference type="EnsemblBacteria" id="AAB98705">
    <property type="protein sequence ID" value="AAB98705"/>
    <property type="gene ID" value="MJ_0704"/>
</dbReference>
<dbReference type="GeneID" id="1451572"/>
<dbReference type="KEGG" id="mja:MJ_0704"/>
<dbReference type="eggNOG" id="arCOG05096">
    <property type="taxonomic scope" value="Archaea"/>
</dbReference>
<dbReference type="HOGENOM" id="CLU_043915_0_0_2"/>
<dbReference type="InParanoid" id="Q58115"/>
<dbReference type="OrthoDB" id="379296at2157"/>
<dbReference type="Proteomes" id="UP000000805">
    <property type="component" value="Chromosome"/>
</dbReference>
<dbReference type="GO" id="GO:0005886">
    <property type="term" value="C:plasma membrane"/>
    <property type="evidence" value="ECO:0007669"/>
    <property type="project" value="UniProtKB-SubCell"/>
</dbReference>
<gene>
    <name type="ordered locus">MJ0704</name>
</gene>